<feature type="chain" id="PRO_1000097522" description="Queuine tRNA-ribosyltransferase">
    <location>
        <begin position="1"/>
        <end position="377"/>
    </location>
</feature>
<feature type="region of interest" description="RNA binding" evidence="1">
    <location>
        <begin position="246"/>
        <end position="252"/>
    </location>
</feature>
<feature type="region of interest" description="RNA binding; important for wobble base 34 recognition" evidence="1">
    <location>
        <begin position="270"/>
        <end position="274"/>
    </location>
</feature>
<feature type="active site" description="Proton acceptor" evidence="1">
    <location>
        <position position="89"/>
    </location>
</feature>
<feature type="active site" description="Nucleophile" evidence="1">
    <location>
        <position position="265"/>
    </location>
</feature>
<feature type="binding site" evidence="1">
    <location>
        <begin position="89"/>
        <end position="93"/>
    </location>
    <ligand>
        <name>substrate</name>
    </ligand>
</feature>
<feature type="binding site" evidence="1">
    <location>
        <position position="143"/>
    </location>
    <ligand>
        <name>substrate</name>
    </ligand>
</feature>
<feature type="binding site" evidence="1">
    <location>
        <position position="188"/>
    </location>
    <ligand>
        <name>substrate</name>
    </ligand>
</feature>
<feature type="binding site" evidence="1">
    <location>
        <position position="215"/>
    </location>
    <ligand>
        <name>substrate</name>
    </ligand>
</feature>
<feature type="binding site" evidence="1">
    <location>
        <position position="303"/>
    </location>
    <ligand>
        <name>Zn(2+)</name>
        <dbReference type="ChEBI" id="CHEBI:29105"/>
    </ligand>
</feature>
<feature type="binding site" evidence="1">
    <location>
        <position position="305"/>
    </location>
    <ligand>
        <name>Zn(2+)</name>
        <dbReference type="ChEBI" id="CHEBI:29105"/>
    </ligand>
</feature>
<feature type="binding site" evidence="1">
    <location>
        <position position="308"/>
    </location>
    <ligand>
        <name>Zn(2+)</name>
        <dbReference type="ChEBI" id="CHEBI:29105"/>
    </ligand>
</feature>
<feature type="binding site" evidence="1">
    <location>
        <position position="334"/>
    </location>
    <ligand>
        <name>Zn(2+)</name>
        <dbReference type="ChEBI" id="CHEBI:29105"/>
    </ligand>
</feature>
<comment type="function">
    <text evidence="1">Catalyzes the base-exchange of a guanine (G) residue with the queuine precursor 7-aminomethyl-7-deazaguanine (PreQ1) at position 34 (anticodon wobble position) in tRNAs with GU(N) anticodons (tRNA-Asp, -Asn, -His and -Tyr). Catalysis occurs through a double-displacement mechanism. The nucleophile active site attacks the C1' of nucleotide 34 to detach the guanine base from the RNA, forming a covalent enzyme-RNA intermediate. The proton acceptor active site deprotonates the incoming PreQ1, allowing a nucleophilic attack on the C1' of the ribose to form the product. After dissociation, two additional enzymatic reactions on the tRNA convert PreQ1 to queuine (Q), resulting in the hypermodified nucleoside queuosine (7-(((4,5-cis-dihydroxy-2-cyclopenten-1-yl)amino)methyl)-7-deazaguanosine).</text>
</comment>
<comment type="catalytic activity">
    <reaction evidence="1">
        <text>7-aminomethyl-7-carbaguanine + guanosine(34) in tRNA = 7-aminomethyl-7-carbaguanosine(34) in tRNA + guanine</text>
        <dbReference type="Rhea" id="RHEA:24104"/>
        <dbReference type="Rhea" id="RHEA-COMP:10341"/>
        <dbReference type="Rhea" id="RHEA-COMP:10342"/>
        <dbReference type="ChEBI" id="CHEBI:16235"/>
        <dbReference type="ChEBI" id="CHEBI:58703"/>
        <dbReference type="ChEBI" id="CHEBI:74269"/>
        <dbReference type="ChEBI" id="CHEBI:82833"/>
        <dbReference type="EC" id="2.4.2.29"/>
    </reaction>
</comment>
<comment type="cofactor">
    <cofactor evidence="1">
        <name>Zn(2+)</name>
        <dbReference type="ChEBI" id="CHEBI:29105"/>
    </cofactor>
    <text evidence="1">Binds 1 zinc ion per subunit.</text>
</comment>
<comment type="pathway">
    <text evidence="1">tRNA modification; tRNA-queuosine biosynthesis.</text>
</comment>
<comment type="subunit">
    <text evidence="1">Homodimer. Within each dimer, one monomer is responsible for RNA recognition and catalysis, while the other monomer binds to the replacement base PreQ1.</text>
</comment>
<comment type="similarity">
    <text evidence="1">Belongs to the queuine tRNA-ribosyltransferase family.</text>
</comment>
<keyword id="KW-0328">Glycosyltransferase</keyword>
<keyword id="KW-0479">Metal-binding</keyword>
<keyword id="KW-0671">Queuosine biosynthesis</keyword>
<keyword id="KW-0808">Transferase</keyword>
<keyword id="KW-0819">tRNA processing</keyword>
<keyword id="KW-0862">Zinc</keyword>
<name>TGT_ACIBC</name>
<reference key="1">
    <citation type="journal article" date="2008" name="Antimicrob. Agents Chemother.">
        <title>Whole-genome pyrosequencing of an epidemic multidrug-resistant Acinetobacter baumannii strain belonging to the European clone II group.</title>
        <authorList>
            <person name="Iacono M."/>
            <person name="Villa L."/>
            <person name="Fortini D."/>
            <person name="Bordoni R."/>
            <person name="Imperi F."/>
            <person name="Bonnal R.J."/>
            <person name="Sicheritz-Ponten T."/>
            <person name="De Bellis G."/>
            <person name="Visca P."/>
            <person name="Cassone A."/>
            <person name="Carattoli A."/>
        </authorList>
    </citation>
    <scope>NUCLEOTIDE SEQUENCE [LARGE SCALE GENOMIC DNA]</scope>
    <source>
        <strain>ACICU</strain>
    </source>
</reference>
<evidence type="ECO:0000255" key="1">
    <source>
        <dbReference type="HAMAP-Rule" id="MF_00168"/>
    </source>
</evidence>
<dbReference type="EC" id="2.4.2.29" evidence="1"/>
<dbReference type="EMBL" id="CP000863">
    <property type="protein sequence ID" value="ACC58476.1"/>
    <property type="molecule type" value="Genomic_DNA"/>
</dbReference>
<dbReference type="RefSeq" id="WP_000667231.1">
    <property type="nucleotide sequence ID" value="NZ_CP031380.1"/>
</dbReference>
<dbReference type="SMR" id="B2HYN7"/>
<dbReference type="GeneID" id="92895192"/>
<dbReference type="KEGG" id="abc:ACICU_03164"/>
<dbReference type="HOGENOM" id="CLU_022060_0_1_6"/>
<dbReference type="UniPathway" id="UPA00392"/>
<dbReference type="Proteomes" id="UP000008839">
    <property type="component" value="Chromosome"/>
</dbReference>
<dbReference type="GO" id="GO:0005829">
    <property type="term" value="C:cytosol"/>
    <property type="evidence" value="ECO:0007669"/>
    <property type="project" value="TreeGrafter"/>
</dbReference>
<dbReference type="GO" id="GO:0046872">
    <property type="term" value="F:metal ion binding"/>
    <property type="evidence" value="ECO:0007669"/>
    <property type="project" value="UniProtKB-KW"/>
</dbReference>
<dbReference type="GO" id="GO:0008479">
    <property type="term" value="F:tRNA-guanosine(34) queuine transglycosylase activity"/>
    <property type="evidence" value="ECO:0007669"/>
    <property type="project" value="UniProtKB-UniRule"/>
</dbReference>
<dbReference type="GO" id="GO:0008616">
    <property type="term" value="P:queuosine biosynthetic process"/>
    <property type="evidence" value="ECO:0007669"/>
    <property type="project" value="UniProtKB-UniRule"/>
</dbReference>
<dbReference type="GO" id="GO:0002099">
    <property type="term" value="P:tRNA wobble guanine modification"/>
    <property type="evidence" value="ECO:0007669"/>
    <property type="project" value="TreeGrafter"/>
</dbReference>
<dbReference type="GO" id="GO:0101030">
    <property type="term" value="P:tRNA-guanine transglycosylation"/>
    <property type="evidence" value="ECO:0007669"/>
    <property type="project" value="InterPro"/>
</dbReference>
<dbReference type="FunFam" id="3.20.20.105:FF:000001">
    <property type="entry name" value="Queuine tRNA-ribosyltransferase"/>
    <property type="match status" value="1"/>
</dbReference>
<dbReference type="Gene3D" id="3.20.20.105">
    <property type="entry name" value="Queuine tRNA-ribosyltransferase-like"/>
    <property type="match status" value="1"/>
</dbReference>
<dbReference type="HAMAP" id="MF_00168">
    <property type="entry name" value="Q_tRNA_Tgt"/>
    <property type="match status" value="1"/>
</dbReference>
<dbReference type="InterPro" id="IPR050076">
    <property type="entry name" value="ArchSynthase1/Queuine_TRR"/>
</dbReference>
<dbReference type="InterPro" id="IPR004803">
    <property type="entry name" value="TGT"/>
</dbReference>
<dbReference type="InterPro" id="IPR036511">
    <property type="entry name" value="TGT-like_sf"/>
</dbReference>
<dbReference type="InterPro" id="IPR002616">
    <property type="entry name" value="tRNA_ribo_trans-like"/>
</dbReference>
<dbReference type="NCBIfam" id="TIGR00430">
    <property type="entry name" value="Q_tRNA_tgt"/>
    <property type="match status" value="1"/>
</dbReference>
<dbReference type="NCBIfam" id="TIGR00449">
    <property type="entry name" value="tgt_general"/>
    <property type="match status" value="1"/>
</dbReference>
<dbReference type="PANTHER" id="PTHR46499">
    <property type="entry name" value="QUEUINE TRNA-RIBOSYLTRANSFERASE"/>
    <property type="match status" value="1"/>
</dbReference>
<dbReference type="PANTHER" id="PTHR46499:SF1">
    <property type="entry name" value="QUEUINE TRNA-RIBOSYLTRANSFERASE"/>
    <property type="match status" value="1"/>
</dbReference>
<dbReference type="Pfam" id="PF01702">
    <property type="entry name" value="TGT"/>
    <property type="match status" value="1"/>
</dbReference>
<dbReference type="SUPFAM" id="SSF51713">
    <property type="entry name" value="tRNA-guanine transglycosylase"/>
    <property type="match status" value="1"/>
</dbReference>
<organism>
    <name type="scientific">Acinetobacter baumannii (strain ACICU)</name>
    <dbReference type="NCBI Taxonomy" id="405416"/>
    <lineage>
        <taxon>Bacteria</taxon>
        <taxon>Pseudomonadati</taxon>
        <taxon>Pseudomonadota</taxon>
        <taxon>Gammaproteobacteria</taxon>
        <taxon>Moraxellales</taxon>
        <taxon>Moraxellaceae</taxon>
        <taxon>Acinetobacter</taxon>
        <taxon>Acinetobacter calcoaceticus/baumannii complex</taxon>
    </lineage>
</organism>
<sequence>MKFEKLGQSGRARRGRLTLEHGVVETPVFMPVGTYGTVKGMLPRDIEDIQAQIILGNTFHLYLRPGLEVIKQHGGLHDFIKWNKPILTDSGGFQVFSLGAMRKIKEEGVTFRSPIDGSKVFLSPEISMEIQHVLNSDIVMIFDECTPYPATHEEAQKSLQLSLRWAKRCKTHHHDELKNKNALFGIIQGGMYEDLRDESLNGLLEIGFDGYAIGGLSVGEPKEEMIKVLDYLPNKMPHDKPRYLMGVGKPEDIVEAVRRGVDMFDCVMPTRNARNGHYFVTDGLVRIRNSKYRHDQGPLDPHCDCYTCKNFTRAYLFHLEKCGEMLASMLGTIHNLRYYQRLTEGMRDALDNGTFDEFVQDFYARRGLEVPPCPVDE</sequence>
<accession>B2HYN7</accession>
<protein>
    <recommendedName>
        <fullName evidence="1">Queuine tRNA-ribosyltransferase</fullName>
        <ecNumber evidence="1">2.4.2.29</ecNumber>
    </recommendedName>
    <alternativeName>
        <fullName evidence="1">Guanine insertion enzyme</fullName>
    </alternativeName>
    <alternativeName>
        <fullName evidence="1">tRNA-guanine transglycosylase</fullName>
    </alternativeName>
</protein>
<proteinExistence type="inferred from homology"/>
<gene>
    <name evidence="1" type="primary">tgt</name>
    <name type="ordered locus">ACICU_03164</name>
</gene>